<proteinExistence type="evidence at protein level"/>
<sequence>MSDVAETLDPLRLPLQGERLIEASAGTGKTFTIAALYLRLLLGLGGSAAFPRPLTVEELLVVTFTEAATAELRGRIRSNIHELRIACLRETTDNPLYERLLEEIDDKAQAAQWLLLAERQMDEAAVFTIHGFCQRMLNLNAFESGMLFEQQLIEDESLLRYQACADFWRRHCYPLPREIAQVVFETWKGPQALLRDINRYLQGEAPVIKAPPPDDETLASRHAQIVARIDTVKQQWRDAVGELDALIESSGIDRRKFNRSNQAKWIDKISAWAEEETNSYQLPESLEKFSQRFLEDRTKAGGETPRHPLFEAIDQLLAEPLSIRDLVITRALAEIRETVAREKRRRGELGFDDMLSRLDSALRSESGEVLAAAIRTRFPVAMIDEFQDTDPQQYRIFRRIWHHQPETALLLIGDPKQAIYAFRGADIFTYMKARSEVHAHYTLDTNWRSAPGMVNSVNKLFSQTDDAFMFREIPFIPVKSAGKNQALRFVFKGETQPAMKMWLMEGESCGVGDYQSTMAQVCAAQIRDWLQAGQRGEALLMNGDDARPVRASDISVLVRSRQEAAQVRDALTLLEIPSVYLSNRDSVFETLEAQEMLWLLQAVMTPERENTLRSALATSMMGLNALDIETLNNDEHAWDVVVEEFDGYRQIWRKRGVMPMLRALMSARNIAENLLATAGGERRLTDILHISELLQEAGTQLESEHALVRWLSQHILEPDSNASSQQMRLESDKHLVQIVTIHKSKGLEYPLVWLPFITNFRVQEQAFYHDRHSFEAVLDLNAAPESVDLAEAERLAEDLRLLYVALTRSVWHCSLGVAPLVRRRGDKKGDTDVHQSALGRLLQKGEPQDAAGLRTCIEALCDDDIAWQTAQTGDNQPWQVNDVSTAELNAKTLQRLPGDNWRVTSYSGLQQRGHGIAQDLMPRLDVDAAGVASVVEEPTLTPHQFPRGASPGTFLHSLFEDLDFTQPVDPNWVREKLELGGFESQWEPVLTEWITAVLQAPLNETGVSLSQLSARNKQVEMEFYLPISEPLIASQLDTLIRQFDPLSAGCPPLEFMQVRGMLKGFIDLVFRHEGRYYLLDYKSNWLGEDSSAYTQQAMAAAMQAHRYDLQYQLYTLALHRYLRHRIADYDYEHHFGGVIYLFLRGVDKEHPQQGIYTTRPNAGLIALMDEMFAGMTLEEA</sequence>
<keyword id="KW-0002">3D-structure</keyword>
<keyword id="KW-0067">ATP-binding</keyword>
<keyword id="KW-0903">Direct protein sequencing</keyword>
<keyword id="KW-0227">DNA damage</keyword>
<keyword id="KW-0234">DNA repair</keyword>
<keyword id="KW-0238">DNA-binding</keyword>
<keyword id="KW-0269">Exonuclease</keyword>
<keyword id="KW-0347">Helicase</keyword>
<keyword id="KW-0378">Hydrolase</keyword>
<keyword id="KW-0413">Isomerase</keyword>
<keyword id="KW-0460">Magnesium</keyword>
<keyword id="KW-0479">Metal-binding</keyword>
<keyword id="KW-0540">Nuclease</keyword>
<keyword id="KW-0547">Nucleotide-binding</keyword>
<keyword id="KW-1185">Reference proteome</keyword>
<accession>P08394</accession>
<accession>Q2MA17</accession>
<name>RECB_ECOLI</name>
<dbReference type="EC" id="3.1.11.5" evidence="1 26 32"/>
<dbReference type="EC" id="5.6.2.4" evidence="1 6 7 32"/>
<dbReference type="EMBL" id="X04581">
    <property type="protein sequence ID" value="CAA28250.1"/>
    <property type="molecule type" value="Genomic_DNA"/>
</dbReference>
<dbReference type="EMBL" id="AF179304">
    <property type="protein sequence ID" value="AAD56369.1"/>
    <property type="molecule type" value="Genomic_DNA"/>
</dbReference>
<dbReference type="EMBL" id="U29581">
    <property type="protein sequence ID" value="AAB40467.1"/>
    <property type="molecule type" value="Genomic_DNA"/>
</dbReference>
<dbReference type="EMBL" id="U00096">
    <property type="protein sequence ID" value="AAC75859.1"/>
    <property type="molecule type" value="Genomic_DNA"/>
</dbReference>
<dbReference type="EMBL" id="AP009048">
    <property type="protein sequence ID" value="BAE76889.1"/>
    <property type="molecule type" value="Genomic_DNA"/>
</dbReference>
<dbReference type="EMBL" id="X06227">
    <property type="protein sequence ID" value="CAA29577.1"/>
    <property type="molecule type" value="Genomic_DNA"/>
</dbReference>
<dbReference type="EMBL" id="X04582">
    <property type="protein sequence ID" value="CAA28252.1"/>
    <property type="molecule type" value="Genomic_DNA"/>
</dbReference>
<dbReference type="PIR" id="A25532">
    <property type="entry name" value="NCECX5"/>
</dbReference>
<dbReference type="RefSeq" id="NP_417297.1">
    <property type="nucleotide sequence ID" value="NC_000913.3"/>
</dbReference>
<dbReference type="RefSeq" id="WP_001285993.1">
    <property type="nucleotide sequence ID" value="NZ_LN832404.1"/>
</dbReference>
<dbReference type="PDB" id="1W36">
    <property type="method" value="X-ray"/>
    <property type="resolution" value="3.10 A"/>
    <property type="chains" value="B/E=1-1180"/>
</dbReference>
<dbReference type="PDB" id="3K70">
    <property type="method" value="X-ray"/>
    <property type="resolution" value="3.59 A"/>
    <property type="chains" value="B/E=1-1180"/>
</dbReference>
<dbReference type="PDB" id="5LD2">
    <property type="method" value="EM"/>
    <property type="resolution" value="3.83 A"/>
    <property type="chains" value="B=1-1180"/>
</dbReference>
<dbReference type="PDB" id="5MBV">
    <property type="method" value="EM"/>
    <property type="resolution" value="3.80 A"/>
    <property type="chains" value="B=1-1180"/>
</dbReference>
<dbReference type="PDB" id="6SJB">
    <property type="method" value="EM"/>
    <property type="resolution" value="3.70 A"/>
    <property type="chains" value="B=1-1180"/>
</dbReference>
<dbReference type="PDB" id="6SJE">
    <property type="method" value="EM"/>
    <property type="resolution" value="4.10 A"/>
    <property type="chains" value="B=1-1180"/>
</dbReference>
<dbReference type="PDB" id="6SJF">
    <property type="method" value="EM"/>
    <property type="resolution" value="3.90 A"/>
    <property type="chains" value="B=1-1180"/>
</dbReference>
<dbReference type="PDB" id="6SJG">
    <property type="method" value="EM"/>
    <property type="resolution" value="3.80 A"/>
    <property type="chains" value="B=1-1180"/>
</dbReference>
<dbReference type="PDB" id="6T2U">
    <property type="method" value="EM"/>
    <property type="resolution" value="3.60 A"/>
    <property type="chains" value="B=1-1180"/>
</dbReference>
<dbReference type="PDB" id="6T2V">
    <property type="method" value="EM"/>
    <property type="resolution" value="3.80 A"/>
    <property type="chains" value="B=1-1180"/>
</dbReference>
<dbReference type="PDB" id="7MR0">
    <property type="method" value="EM"/>
    <property type="resolution" value="3.70 A"/>
    <property type="chains" value="B=1-1180"/>
</dbReference>
<dbReference type="PDB" id="7MR1">
    <property type="method" value="EM"/>
    <property type="resolution" value="4.20 A"/>
    <property type="chains" value="B=1-1180"/>
</dbReference>
<dbReference type="PDB" id="7MR2">
    <property type="method" value="EM"/>
    <property type="resolution" value="4.30 A"/>
    <property type="chains" value="B=1-1180"/>
</dbReference>
<dbReference type="PDB" id="7MR3">
    <property type="method" value="EM"/>
    <property type="resolution" value="3.60 A"/>
    <property type="chains" value="B=1-1180"/>
</dbReference>
<dbReference type="PDB" id="7MR4">
    <property type="method" value="EM"/>
    <property type="resolution" value="4.50 A"/>
    <property type="chains" value="B=1-1180"/>
</dbReference>
<dbReference type="PDB" id="8B1R">
    <property type="method" value="EM"/>
    <property type="resolution" value="3.20 A"/>
    <property type="chains" value="B=1-1180"/>
</dbReference>
<dbReference type="PDB" id="8B1T">
    <property type="method" value="EM"/>
    <property type="resolution" value="3.40 A"/>
    <property type="chains" value="B=1-1180"/>
</dbReference>
<dbReference type="PDB" id="8B1U">
    <property type="method" value="EM"/>
    <property type="resolution" value="3.80 A"/>
    <property type="chains" value="B=1-1180"/>
</dbReference>
<dbReference type="PDBsum" id="1W36"/>
<dbReference type="PDBsum" id="3K70"/>
<dbReference type="PDBsum" id="5LD2"/>
<dbReference type="PDBsum" id="5MBV"/>
<dbReference type="PDBsum" id="6SJB"/>
<dbReference type="PDBsum" id="6SJE"/>
<dbReference type="PDBsum" id="6SJF"/>
<dbReference type="PDBsum" id="6SJG"/>
<dbReference type="PDBsum" id="6T2U"/>
<dbReference type="PDBsum" id="6T2V"/>
<dbReference type="PDBsum" id="7MR0"/>
<dbReference type="PDBsum" id="7MR1"/>
<dbReference type="PDBsum" id="7MR2"/>
<dbReference type="PDBsum" id="7MR3"/>
<dbReference type="PDBsum" id="7MR4"/>
<dbReference type="PDBsum" id="8B1R"/>
<dbReference type="PDBsum" id="8B1T"/>
<dbReference type="PDBsum" id="8B1U"/>
<dbReference type="EMDB" id="EMD-10215"/>
<dbReference type="EMDB" id="EMD-10216"/>
<dbReference type="EMDB" id="EMD-10217"/>
<dbReference type="EMDB" id="EMD-10369"/>
<dbReference type="EMDB" id="EMD-10370"/>
<dbReference type="EMDB" id="EMD-23952"/>
<dbReference type="EMDB" id="EMD-23953"/>
<dbReference type="EMDB" id="EMD-23954"/>
<dbReference type="EMDB" id="EMD-23955"/>
<dbReference type="EMDB" id="EMD-23956"/>
<dbReference type="EMDB" id="EMD-3460"/>
<dbReference type="EMDB" id="EMD-4038"/>
<dbReference type="SMR" id="P08394"/>
<dbReference type="BioGRID" id="4262307">
    <property type="interactions" value="596"/>
</dbReference>
<dbReference type="BioGRID" id="851614">
    <property type="interactions" value="3"/>
</dbReference>
<dbReference type="ComplexPortal" id="CPX-2197">
    <property type="entry name" value="Exodeoxyribonuclease V complex"/>
</dbReference>
<dbReference type="DIP" id="DIP-540N"/>
<dbReference type="FunCoup" id="P08394">
    <property type="interactions" value="144"/>
</dbReference>
<dbReference type="IntAct" id="P08394">
    <property type="interactions" value="20"/>
</dbReference>
<dbReference type="MINT" id="P08394"/>
<dbReference type="STRING" id="511145.b2820"/>
<dbReference type="ChEMBL" id="CHEMBL2095232"/>
<dbReference type="jPOST" id="P08394"/>
<dbReference type="PaxDb" id="511145-b2820"/>
<dbReference type="EnsemblBacteria" id="AAC75859">
    <property type="protein sequence ID" value="AAC75859"/>
    <property type="gene ID" value="b2820"/>
</dbReference>
<dbReference type="GeneID" id="947286"/>
<dbReference type="KEGG" id="ecj:JW2788"/>
<dbReference type="KEGG" id="eco:b2820"/>
<dbReference type="KEGG" id="ecoc:C3026_15485"/>
<dbReference type="PATRIC" id="fig|1411691.4.peg.3916"/>
<dbReference type="EchoBASE" id="EB0817"/>
<dbReference type="eggNOG" id="COG1074">
    <property type="taxonomic scope" value="Bacteria"/>
</dbReference>
<dbReference type="HOGENOM" id="CLU_001114_6_0_6"/>
<dbReference type="InParanoid" id="P08394"/>
<dbReference type="OMA" id="EFSDIAH"/>
<dbReference type="OrthoDB" id="9810135at2"/>
<dbReference type="PhylomeDB" id="P08394"/>
<dbReference type="BioCyc" id="EcoCyc:EG10824-MONOMER"/>
<dbReference type="BioCyc" id="MetaCyc:EG10824-MONOMER"/>
<dbReference type="BRENDA" id="3.1.11.5">
    <property type="organism ID" value="2026"/>
</dbReference>
<dbReference type="EvolutionaryTrace" id="P08394"/>
<dbReference type="PRO" id="PR:P08394"/>
<dbReference type="Proteomes" id="UP000000625">
    <property type="component" value="Chromosome"/>
</dbReference>
<dbReference type="GO" id="GO:0005829">
    <property type="term" value="C:cytosol"/>
    <property type="evidence" value="ECO:0000318"/>
    <property type="project" value="GO_Central"/>
</dbReference>
<dbReference type="GO" id="GO:0009338">
    <property type="term" value="C:exodeoxyribonuclease V complex"/>
    <property type="evidence" value="ECO:0000314"/>
    <property type="project" value="EcoCyc"/>
</dbReference>
<dbReference type="GO" id="GO:0043138">
    <property type="term" value="F:3'-5' DNA helicase activity"/>
    <property type="evidence" value="ECO:0000318"/>
    <property type="project" value="GO_Central"/>
</dbReference>
<dbReference type="GO" id="GO:0005524">
    <property type="term" value="F:ATP binding"/>
    <property type="evidence" value="ECO:0000314"/>
    <property type="project" value="EcoCyc"/>
</dbReference>
<dbReference type="GO" id="GO:0016887">
    <property type="term" value="F:ATP hydrolysis activity"/>
    <property type="evidence" value="ECO:0007669"/>
    <property type="project" value="RHEA"/>
</dbReference>
<dbReference type="GO" id="GO:0008094">
    <property type="term" value="F:ATP-dependent activity, acting on DNA"/>
    <property type="evidence" value="ECO:0000314"/>
    <property type="project" value="EcoCyc"/>
</dbReference>
<dbReference type="GO" id="GO:0003677">
    <property type="term" value="F:DNA binding"/>
    <property type="evidence" value="ECO:0007669"/>
    <property type="project" value="UniProtKB-UniRule"/>
</dbReference>
<dbReference type="GO" id="GO:0004520">
    <property type="term" value="F:DNA endonuclease activity"/>
    <property type="evidence" value="ECO:0000314"/>
    <property type="project" value="EcoCyc"/>
</dbReference>
<dbReference type="GO" id="GO:0003678">
    <property type="term" value="F:DNA helicase activity"/>
    <property type="evidence" value="ECO:0000314"/>
    <property type="project" value="EcoCyc"/>
</dbReference>
<dbReference type="GO" id="GO:0015616">
    <property type="term" value="F:DNA translocase activity"/>
    <property type="evidence" value="ECO:0000314"/>
    <property type="project" value="EcoCyc"/>
</dbReference>
<dbReference type="GO" id="GO:0008854">
    <property type="term" value="F:exodeoxyribonuclease V activity"/>
    <property type="evidence" value="ECO:0000314"/>
    <property type="project" value="EcoCyc"/>
</dbReference>
<dbReference type="GO" id="GO:0000287">
    <property type="term" value="F:magnesium ion binding"/>
    <property type="evidence" value="ECO:0007669"/>
    <property type="project" value="UniProtKB-UniRule"/>
</dbReference>
<dbReference type="GO" id="GO:0044355">
    <property type="term" value="P:clearance of foreign intracellular DNA"/>
    <property type="evidence" value="ECO:0000315"/>
    <property type="project" value="UniProtKB"/>
</dbReference>
<dbReference type="GO" id="GO:0006310">
    <property type="term" value="P:DNA recombination"/>
    <property type="evidence" value="ECO:0000314"/>
    <property type="project" value="EcoCyc"/>
</dbReference>
<dbReference type="GO" id="GO:0000724">
    <property type="term" value="P:double-strand break repair via homologous recombination"/>
    <property type="evidence" value="ECO:0000304"/>
    <property type="project" value="EcoCyc"/>
</dbReference>
<dbReference type="GO" id="GO:0000725">
    <property type="term" value="P:recombinational repair"/>
    <property type="evidence" value="ECO:0000314"/>
    <property type="project" value="ComplexPortal"/>
</dbReference>
<dbReference type="GO" id="GO:0009314">
    <property type="term" value="P:response to radiation"/>
    <property type="evidence" value="ECO:0000315"/>
    <property type="project" value="EcoCyc"/>
</dbReference>
<dbReference type="CDD" id="cd22352">
    <property type="entry name" value="RecB_C-like"/>
    <property type="match status" value="1"/>
</dbReference>
<dbReference type="CDD" id="cd18807">
    <property type="entry name" value="SF1_C_UvrD"/>
    <property type="match status" value="1"/>
</dbReference>
<dbReference type="FunFam" id="1.10.3170.10:FF:000001">
    <property type="entry name" value="RecBCD enzyme subunit RecB"/>
    <property type="match status" value="1"/>
</dbReference>
<dbReference type="FunFam" id="1.10.486.10:FF:000006">
    <property type="entry name" value="RecBCD enzyme subunit RecB"/>
    <property type="match status" value="1"/>
</dbReference>
<dbReference type="FunFam" id="3.90.320.10:FF:000003">
    <property type="entry name" value="RecBCD enzyme subunit RecB"/>
    <property type="match status" value="1"/>
</dbReference>
<dbReference type="Gene3D" id="3.90.320.10">
    <property type="match status" value="1"/>
</dbReference>
<dbReference type="Gene3D" id="3.40.50.300">
    <property type="entry name" value="P-loop containing nucleotide triphosphate hydrolases"/>
    <property type="match status" value="2"/>
</dbReference>
<dbReference type="Gene3D" id="1.10.486.10">
    <property type="entry name" value="PCRA, domain 4"/>
    <property type="match status" value="1"/>
</dbReference>
<dbReference type="Gene3D" id="1.10.3170.10">
    <property type="entry name" value="Recbcd, chain B, domain 2"/>
    <property type="match status" value="1"/>
</dbReference>
<dbReference type="HAMAP" id="MF_01485">
    <property type="entry name" value="RecB"/>
    <property type="match status" value="1"/>
</dbReference>
<dbReference type="InterPro" id="IPR014017">
    <property type="entry name" value="DNA_helicase_UvrD-like_C"/>
</dbReference>
<dbReference type="InterPro" id="IPR000212">
    <property type="entry name" value="DNA_helicase_UvrD/REP"/>
</dbReference>
<dbReference type="InterPro" id="IPR027417">
    <property type="entry name" value="P-loop_NTPase"/>
</dbReference>
<dbReference type="InterPro" id="IPR011604">
    <property type="entry name" value="PDDEXK-like_dom_sf"/>
</dbReference>
<dbReference type="InterPro" id="IPR038726">
    <property type="entry name" value="PDDEXK_AddAB-type"/>
</dbReference>
<dbReference type="InterPro" id="IPR004586">
    <property type="entry name" value="RecB"/>
</dbReference>
<dbReference type="InterPro" id="IPR011335">
    <property type="entry name" value="Restrct_endonuc-II-like"/>
</dbReference>
<dbReference type="InterPro" id="IPR014016">
    <property type="entry name" value="UvrD-like_ATP-bd"/>
</dbReference>
<dbReference type="NCBIfam" id="NF008128">
    <property type="entry name" value="PRK10876.1"/>
    <property type="match status" value="1"/>
</dbReference>
<dbReference type="NCBIfam" id="TIGR00609">
    <property type="entry name" value="recB"/>
    <property type="match status" value="1"/>
</dbReference>
<dbReference type="PANTHER" id="PTHR11070:SF23">
    <property type="entry name" value="RECBCD ENZYME SUBUNIT RECB"/>
    <property type="match status" value="1"/>
</dbReference>
<dbReference type="PANTHER" id="PTHR11070">
    <property type="entry name" value="UVRD / RECB / PCRA DNA HELICASE FAMILY MEMBER"/>
    <property type="match status" value="1"/>
</dbReference>
<dbReference type="Pfam" id="PF12705">
    <property type="entry name" value="PDDEXK_1"/>
    <property type="match status" value="1"/>
</dbReference>
<dbReference type="Pfam" id="PF00580">
    <property type="entry name" value="UvrD-helicase"/>
    <property type="match status" value="1"/>
</dbReference>
<dbReference type="Pfam" id="PF13361">
    <property type="entry name" value="UvrD_C"/>
    <property type="match status" value="1"/>
</dbReference>
<dbReference type="SUPFAM" id="SSF52540">
    <property type="entry name" value="P-loop containing nucleoside triphosphate hydrolases"/>
    <property type="match status" value="1"/>
</dbReference>
<dbReference type="SUPFAM" id="SSF52980">
    <property type="entry name" value="Restriction endonuclease-like"/>
    <property type="match status" value="1"/>
</dbReference>
<dbReference type="PROSITE" id="PS51198">
    <property type="entry name" value="UVRD_HELICASE_ATP_BIND"/>
    <property type="match status" value="1"/>
</dbReference>
<dbReference type="PROSITE" id="PS51217">
    <property type="entry name" value="UVRD_HELICASE_CTER"/>
    <property type="match status" value="1"/>
</dbReference>
<reference key="1">
    <citation type="journal article" date="1986" name="Nucleic Acids Res.">
        <title>Complete nucleotide sequence of the Escherichia coli recB gene.</title>
        <authorList>
            <person name="Finch P.W."/>
            <person name="Storey A."/>
            <person name="Chapman K.E."/>
            <person name="Brown K."/>
            <person name="Hickson I.D."/>
            <person name="Emmerson P.T."/>
        </authorList>
    </citation>
    <scope>NUCLEOTIDE SEQUENCE [GENOMIC DNA]</scope>
</reference>
<reference key="2">
    <citation type="journal article" date="2000" name="J. Biol. Chem.">
        <title>Facilitated loading of RecA protein is essential to recombination by RecBCD enzyme.</title>
        <authorList>
            <person name="Arnold D.A."/>
            <person name="Kowalczykowski S.C."/>
        </authorList>
    </citation>
    <scope>NUCLEOTIDE SEQUENCE [GENOMIC DNA]</scope>
    <scope>FUNCTION IN RECA LOADING</scope>
    <scope>MUTAGENESIS OF THR-807</scope>
    <source>
        <strain>V1000</strain>
    </source>
</reference>
<reference key="3">
    <citation type="journal article" date="1997" name="Science">
        <title>The complete genome sequence of Escherichia coli K-12.</title>
        <authorList>
            <person name="Blattner F.R."/>
            <person name="Plunkett G. III"/>
            <person name="Bloch C.A."/>
            <person name="Perna N.T."/>
            <person name="Burland V."/>
            <person name="Riley M."/>
            <person name="Collado-Vides J."/>
            <person name="Glasner J.D."/>
            <person name="Rode C.K."/>
            <person name="Mayhew G.F."/>
            <person name="Gregor J."/>
            <person name="Davis N.W."/>
            <person name="Kirkpatrick H.A."/>
            <person name="Goeden M.A."/>
            <person name="Rose D.J."/>
            <person name="Mau B."/>
            <person name="Shao Y."/>
        </authorList>
    </citation>
    <scope>NUCLEOTIDE SEQUENCE [LARGE SCALE GENOMIC DNA]</scope>
    <source>
        <strain>K12 / MG1655 / ATCC 47076</strain>
    </source>
</reference>
<reference key="4">
    <citation type="journal article" date="2006" name="Mol. Syst. Biol.">
        <title>Highly accurate genome sequences of Escherichia coli K-12 strains MG1655 and W3110.</title>
        <authorList>
            <person name="Hayashi K."/>
            <person name="Morooka N."/>
            <person name="Yamamoto Y."/>
            <person name="Fujita K."/>
            <person name="Isono K."/>
            <person name="Choi S."/>
            <person name="Ohtsubo E."/>
            <person name="Baba T."/>
            <person name="Wanner B.L."/>
            <person name="Mori H."/>
            <person name="Horiuchi T."/>
        </authorList>
    </citation>
    <scope>NUCLEOTIDE SEQUENCE [LARGE SCALE GENOMIC DNA]</scope>
    <source>
        <strain>K12 / W3110 / ATCC 27325 / DSM 5911</strain>
    </source>
</reference>
<reference key="5">
    <citation type="journal article" date="1986" name="Nucleic Acids Res.">
        <title>Complete nucleotide sequence of the Escherichia coli ptr gene encoding protease III.</title>
        <authorList>
            <person name="Finch P.W."/>
            <person name="Wilson R.E."/>
            <person name="Brown K."/>
            <person name="Hickson I.D."/>
            <person name="Emmerson P.T."/>
        </authorList>
    </citation>
    <scope>NUCLEOTIDE SEQUENCE [GENOMIC DNA] OF 1-11</scope>
</reference>
<reference key="6">
    <citation type="journal article" date="1992" name="J. Biol. Chem.">
        <title>Reconstitution of the activities of the RecBCD holoenzyme of Escherichia coli from the purified subunits.</title>
        <authorList>
            <person name="Masterson C."/>
            <person name="Boehmer P.E."/>
            <person name="McDonald F."/>
            <person name="Chaudhuri S."/>
            <person name="Hickson I.D."/>
            <person name="Emmerson P.T."/>
        </authorList>
    </citation>
    <scope>PROTEIN SEQUENCE OF 2-11</scope>
    <scope>FUNCTION OF RECBCD AS AN EXONUCLEASE; HELICASE AND ATPASE</scope>
    <scope>SUBUNIT</scope>
</reference>
<reference key="7">
    <citation type="journal article" date="1986" name="Nucleic Acids Res.">
        <title>Complete nucleotide sequence of recD, the structural gene for the alpha subunit of Exonuclease V of Escherichia coli.</title>
        <authorList>
            <person name="Finch P.W."/>
            <person name="Storey A."/>
            <person name="Brown K."/>
            <person name="Hickson I.D."/>
            <person name="Emmerson P.T."/>
        </authorList>
    </citation>
    <scope>NUCLEOTIDE SEQUENCE [GENOMIC DNA] OF 1093-1180</scope>
</reference>
<reference key="8">
    <citation type="journal article" date="1972" name="J. Bacteriol.">
        <title>Degradation of bacteriophage lambda deoxyribonucleic acid after restriction by Escherichia coli K-12.</title>
        <authorList>
            <person name="Simmon V.F."/>
            <person name="Lederberg S."/>
        </authorList>
    </citation>
    <scope>FUNCTION IN DEGRADATION OF LAMBDA VIRUS DNA</scope>
    <scope>DISRUPTION PHENOTYPE</scope>
    <source>
        <strain>K12</strain>
    </source>
</reference>
<reference key="9">
    <citation type="journal article" date="1972" name="J. Biol. Chem.">
        <title>Purification and properties of the recBC DNase of Escherichia coli K-12.</title>
        <authorList>
            <person name="Goldmark P.J."/>
            <person name="Linn S."/>
        </authorList>
    </citation>
    <scope>FUNCTION AS AN ENDO- AND EXODEOXYRIBONUCLEASE</scope>
    <scope>CATALYTIC ACTIVITY</scope>
    <scope>ATP-DEPENDENCE</scope>
    <scope>SUBUNIT</scope>
    <source>
        <strain>K12</strain>
    </source>
</reference>
<reference key="10">
    <citation type="journal article" date="1973" name="J. Biol. Chem.">
        <title>The recBC deoxyribonuclease of Escherichia coli K-12. Substrate specificity and reaction intermediates.</title>
        <authorList>
            <person name="Karu A.E."/>
            <person name="MacKay V."/>
            <person name="Goldmark P.J."/>
            <person name="Linn S."/>
        </authorList>
    </citation>
    <scope>FUNCTION</scope>
    <scope>SUBSTRATES</scope>
    <scope>PROCESSIVITY</scope>
</reference>
<reference key="11">
    <citation type="journal article" date="1973" name="Proc. Natl. Acad. Sci. U.S.A.">
        <title>Purification and properties of the gamma-protein specified by bacteriophage lambda: an inhibitor of the host RecBC recombination enzyme.</title>
        <authorList>
            <person name="Sakaki Y."/>
            <person name="Karu A.E."/>
            <person name="Linn S."/>
            <person name="Echols H."/>
        </authorList>
    </citation>
    <scope>ACTIVITY REGULATION BY LAMBDA GAM PROTEIN (MICROBIAL INFECTION)</scope>
</reference>
<reference key="12">
    <citation type="journal article" date="1975" name="J. Virol.">
        <title>Transfection of Escherichia coli spheroplasts. V. Activity of recBC nuclease in rec+ and rec minus spheroplasts measured with different forms of bacteriophage DNA.</title>
        <authorList>
            <person name="Benzinger R."/>
            <person name="Enquist L.W."/>
            <person name="Skalka A."/>
        </authorList>
    </citation>
    <scope>FUNCTION IN DEGRADATION OF VIRUS DNA</scope>
    <scope>DISRUPTION PHENOTYPE</scope>
</reference>
<reference key="13">
    <citation type="journal article" date="1984" name="J. Bacteriol.">
        <title>Escherichia coli recBC deletion mutants.</title>
        <authorList>
            <person name="Chaudhury A.M."/>
            <person name="Smith G.R."/>
        </authorList>
    </citation>
    <scope>DISRUPTION PHENOTYPE</scope>
</reference>
<reference key="14">
    <citation type="journal article" date="1986" name="Proc. Natl. Acad. Sci. U.S.A.">
        <title>recD: the gene for an essential third subunit of exonuclease V.</title>
        <authorList>
            <person name="Amundsen S.K."/>
            <person name="Taylor A.F."/>
            <person name="Chaudhury A.M."/>
            <person name="Smith G.R."/>
        </authorList>
    </citation>
    <scope>OPERON</scope>
    <scope>SUBUNIT</scope>
</reference>
<reference key="15">
    <citation type="journal article" date="1991" name="J. Bacteriol.">
        <title>Lambda Gam protein inhibits the helicase and chi-stimulated recombination activities of Escherichia coli RecBCD enzyme.</title>
        <authorList>
            <person name="Murphy K.C."/>
        </authorList>
    </citation>
    <scope>ACTIVITY REGULATION BY LAMBDA GAM PROTEIN (MICROBIAL INFECTION)</scope>
    <scope>INTERACTION WITH LAMBDA GAMS (MICROBIAL INFECTION)</scope>
</reference>
<reference key="16">
    <citation type="journal article" date="1992" name="Proc. Natl. Acad. Sci. U.S.A.">
        <title>RecBCD enzyme is altered upon cutting DNA at a chi recombination hotspot.</title>
        <authorList>
            <person name="Taylor A.F."/>
            <person name="Smith G.R."/>
        </authorList>
    </citation>
    <scope>FUNCTION</scope>
    <scope>ACTIVITY REGULATION</scope>
</reference>
<reference key="17">
    <citation type="journal article" date="1995" name="J. Biol. Chem.">
        <title>Role of the Escherichia coli recombination hotspot, chi, in RecABCD-dependent homologous pairing.</title>
        <authorList>
            <person name="Dixon D.A."/>
            <person name="Kowalczykowski S.C."/>
        </authorList>
    </citation>
    <scope>FUNCTION IN HOMOLOGOUS RECOMBINATION</scope>
</reference>
<reference key="18">
    <citation type="journal article" date="1997" name="Cell">
        <title>The translocating RecBCD enzyme stimulates recombination by directing RecA protein onto ssDNA in a chi-regulated manner.</title>
        <authorList>
            <person name="Anderson D.G."/>
            <person name="Kowalczykowski S.C."/>
        </authorList>
    </citation>
    <scope>FUNCTION IN RECA-LOADING</scope>
</reference>
<reference key="19">
    <citation type="journal article" date="1997" name="Proc. Natl. Acad. Sci. U.S.A.">
        <title>The recombination hotspot Chi is recognized by the translocating RecBCD enzyme as the single strand of DNA containing the sequence 5'-GCTGGTGG-3'.</title>
        <authorList>
            <person name="Bianco P.R."/>
            <person name="Kowalczykowski S.C."/>
        </authorList>
    </citation>
    <scope>FUNCTION IN RECOGNITION OF CHI</scope>
</reference>
<reference key="20">
    <citation type="journal article" date="1998" name="J. Biol. Chem.">
        <title>The Bloom's syndrome helicase unwinds G4 DNA.</title>
        <authorList>
            <person name="Sun H."/>
            <person name="Karow J.K."/>
            <person name="Hickson I.D."/>
            <person name="Maizels N."/>
        </authorList>
    </citation>
    <scope>DOES NOT UNWIND G-QUADRUPLEX DNA</scope>
</reference>
<reference key="21">
    <citation type="journal article" date="1998" name="J. Mol. Biol.">
        <title>Identification of the nuclease active site in the multifunctional RecBCD enzyme by creation of a chimeric enzyme.</title>
        <authorList>
            <person name="Yu M."/>
            <person name="Souaya J."/>
            <person name="Julin D.A."/>
        </authorList>
    </citation>
    <scope>FUNCTION</scope>
    <scope>ACTIVE SITE</scope>
    <scope>DOMAIN</scope>
    <scope>MUTAGENESIS OF ASP-1080</scope>
</reference>
<reference key="22">
    <citation type="journal article" date="1998" name="Proc. Natl. Acad. Sci. U.S.A.">
        <title>The 30-kDa C-terminal domain of the RecB protein is critical for the nuclease activity, but not the helicase activity, of the RecBCD enzyme from Escherichia coli.</title>
        <authorList>
            <person name="Yu M."/>
            <person name="Souaya J."/>
            <person name="Julin D.A."/>
        </authorList>
    </citation>
    <scope>FUNCTION</scope>
    <scope>CATALYTIC ACTIVITY</scope>
    <scope>INTERACTION WITH RECC</scope>
    <scope>DOMAIN</scope>
    <scope>DNA-BINDING</scope>
</reference>
<reference key="23">
    <citation type="journal article" date="1999" name="Nucleic Acids Res.">
        <title>Isolation and characterization of the C-terminal nuclease domain from the RecB protein of Escherichia coli.</title>
        <authorList>
            <person name="Zhang X.J."/>
            <person name="Julin D.A."/>
        </authorList>
    </citation>
    <scope>FUNCTION</scope>
    <scope>ACTIVE SITE</scope>
    <scope>DOMAIN</scope>
    <scope>MUTAGENESIS OF ASP-1080</scope>
</reference>
<reference key="24">
    <citation type="journal article" date="1999" name="Genes Dev.">
        <title>Regulation of homologous recombination: Chi inactivates RecBCD enzyme by disassembly of the three subunits.</title>
        <authorList>
            <person name="Taylor A.F."/>
            <person name="Smith G.R."/>
        </authorList>
    </citation>
    <scope>FUNCTION</scope>
    <scope>ACTIVITY REGULATION</scope>
</reference>
<reference key="25">
    <citation type="journal article" date="2003" name="Nature">
        <title>RecBCD enzyme is a DNA helicase with fast and slow motors of opposite polarity.</title>
        <authorList>
            <person name="Taylor A.F."/>
            <person name="Smith G.R."/>
        </authorList>
    </citation>
    <scope>FUNCTION OF RECB AS A SLOW 3'-5' HELICASE</scope>
    <scope>CATALYTIC ACTIVITY</scope>
    <scope>MUTAGENESIS OF LYS-29</scope>
</reference>
<reference key="26">
    <citation type="journal article" date="2003" name="Nature">
        <title>RecBCD enzyme is a bipolar DNA helicase.</title>
        <authorList>
            <person name="Dillingham M.S."/>
            <person name="Spies M."/>
            <person name="Kowalczykowski S.C."/>
        </authorList>
    </citation>
    <scope>FUNCTION OF RECBCD AS A BIPOLAR HELICASE</scope>
    <scope>CATALYTIC ACTIVITY</scope>
</reference>
<reference key="27">
    <citation type="journal article" date="2005" name="J. Biol. Chem.">
        <title>Bipolar DNA translocation contributes to highly processive DNA unwinding by RecBCD enzyme.</title>
        <authorList>
            <person name="Dillingham M.S."/>
            <person name="Webb M.R."/>
            <person name="Kowalczykowski S.C."/>
        </authorList>
    </citation>
    <scope>FUNCTION</scope>
    <scope>RATE</scope>
    <scope>DNA-BINDING</scope>
    <scope>MUTAGENESIS OF LYS-29</scope>
</reference>
<reference key="28">
    <citation type="journal article" date="2006" name="Biochemistry">
        <title>The nuclease domain of the Escherichia coli RecBCD enzyme catalyzes degradation of linear and circular single-stranded and double-stranded DNA.</title>
        <authorList>
            <person name="Sun J.Z."/>
            <person name="Julin D.A."/>
            <person name="Hu J.S."/>
        </authorList>
    </citation>
    <scope>FUNCTION AS A NUCLEASE</scope>
    <scope>COFACTOR</scope>
    <scope>MUTAGENESIS OF ASP-1067 AND ASP-1080</scope>
</reference>
<reference key="29">
    <citation type="journal article" date="2006" name="Mol. Cell">
        <title>The RecA binding locus of RecBCD is a general domain for recruitment of DNA strand exchange proteins.</title>
        <authorList>
            <person name="Spies M."/>
            <person name="Kowalczykowski S.C."/>
        </authorList>
    </citation>
    <scope>INTERACTION WITH RECA</scope>
    <scope>SUBUNIT</scope>
    <scope>DOMAIN</scope>
</reference>
<reference key="30">
    <citation type="journal article" date="2007" name="Genes Dev.">
        <title>Intersubunit signaling in RecBCD enzyme, a complex protein machine regulated by Chi hot spots.</title>
        <authorList>
            <person name="Amundsen S.K."/>
            <person name="Taylor A.F."/>
            <person name="Reddy M."/>
            <person name="Smith G.R."/>
        </authorList>
    </citation>
    <scope>FUNCTION</scope>
    <scope>MUTAGENESIS OF TYR-803 AND VAL-804</scope>
</reference>
<reference key="31">
    <citation type="journal article" date="2010" name="Nat. Struct. Mol. Biol.">
        <title>Escherichia coli RecBC helicase has two translocase activities controlled by a single ATPase motor.</title>
        <authorList>
            <person name="Wu C.G."/>
            <person name="Bradford C."/>
            <person name="Lohman T.M."/>
        </authorList>
    </citation>
    <scope>FUNCTION IN DUAL DIRECTION TRANSLOCATION</scope>
</reference>
<reference key="32">
    <citation type="journal article" date="2011" name="Mol. Microbiol.">
        <title>A dual function of the CRISPR-Cas system in bacterial antivirus immunity and DNA repair.</title>
        <authorList>
            <person name="Babu M."/>
            <person name="Beloglazova N."/>
            <person name="Flick R."/>
            <person name="Graham C."/>
            <person name="Skarina T."/>
            <person name="Nocek B."/>
            <person name="Gagarinova A."/>
            <person name="Pogoutse O."/>
            <person name="Brown G."/>
            <person name="Binkowski A."/>
            <person name="Phanse S."/>
            <person name="Joachimiak A."/>
            <person name="Koonin E.V."/>
            <person name="Savchenko A."/>
            <person name="Emili A."/>
            <person name="Greenblatt J."/>
            <person name="Edwards A.M."/>
            <person name="Yakunin A.F."/>
        </authorList>
    </citation>
    <scope>INTERACTION WITH CAS1</scope>
    <source>
        <strain>K12</strain>
    </source>
</reference>
<reference key="33">
    <citation type="journal article" date="2013" name="Nature">
        <title>DNA unwinding heterogeneity by RecBCD results from static molecules able to equilibrate.</title>
        <authorList>
            <person name="Liu B."/>
            <person name="Baskin R.J."/>
            <person name="Kowalczykowski S.C."/>
        </authorList>
    </citation>
    <scope>FUNCTION</scope>
    <scope>ENZYME RATE</scope>
    <scope>ENZYME STATE SWITCHING</scope>
    <scope>MUTAGENESIS OF LYS-29</scope>
</reference>
<reference key="34">
    <citation type="journal article" date="2014" name="J. Mol. Biol.">
        <title>Control of RecBCD enzyme activity by DNA binding- and Chi hotspot-dependent conformational changes.</title>
        <authorList>
            <person name="Taylor A.F."/>
            <person name="Amundsen S.K."/>
            <person name="Guttman M."/>
            <person name="Lee K.K."/>
            <person name="Luo J."/>
            <person name="Ranish J."/>
            <person name="Smith G.R."/>
        </authorList>
    </citation>
    <scope>FUNCTION</scope>
    <scope>MODEL OF DOMAIN MOVEMENT</scope>
</reference>
<reference key="35">
    <citation type="journal article" date="2020" name="Cell">
        <title>Bacterial Retrons Function In Anti-Phage Defense.</title>
        <authorList>
            <person name="Millman A."/>
            <person name="Bernheim A."/>
            <person name="Stokar-Avihail A."/>
            <person name="Fedorenko T."/>
            <person name="Voichek M."/>
            <person name="Leavitt A."/>
            <person name="Oppenheimer-Shaanan Y."/>
            <person name="Sorek R."/>
        </authorList>
    </citation>
    <scope>DISRUPTION PHENOTYPE</scope>
    <source>
        <strain>K12 / BW25141</strain>
    </source>
</reference>
<reference evidence="42" key="36">
    <citation type="journal article" date="2004" name="Nature">
        <title>Crystal structure of RecBCD enzyme reveals a machine for processing DNA breaks.</title>
        <authorList>
            <person name="Singleton M.R."/>
            <person name="Dillingham M.S."/>
            <person name="Gaudier M."/>
            <person name="Kowalczykowski S.C."/>
            <person name="Wigley D.B."/>
        </authorList>
    </citation>
    <scope>X-RAY CRYSTALLOGRAPHY (3.1 ANGSTROMS) IN COMPLEX WITH DNA</scope>
    <scope>COFACTOR</scope>
    <scope>SUBUNIT</scope>
</reference>
<reference evidence="43" key="37">
    <citation type="journal article" date="2008" name="EMBO J.">
        <title>DNA binding to RecD: role of the 1B domain in SF1B helicase activity.</title>
        <authorList>
            <person name="Saikrishnan K."/>
            <person name="Griffiths S.P."/>
            <person name="Cook N."/>
            <person name="Court R."/>
            <person name="Wigley D.B."/>
        </authorList>
    </citation>
    <scope>X-RAY CRYSTALLOGRAPHY (3.59 ANGSTROMS) IN COMPLEX WITH DNA</scope>
    <scope>COFACTOR</scope>
    <scope>SUBUNIT</scope>
</reference>
<reference evidence="44" key="38">
    <citation type="journal article" date="2016" name="Elife">
        <title>Mechanism for nuclease regulation in RecBCD.</title>
        <authorList>
            <person name="Wilkinson M."/>
            <person name="Chaban Y."/>
            <person name="Wigley D.B."/>
        </authorList>
    </citation>
    <scope>STRUCTURE BY ELECTRON MICROSCOPY (3.83 ANGSTROMS) OF RECBCD IN COMPLEX WITH FORKED DNA SUBSTRATE</scope>
    <scope>MUTAGENESIS OF ASP-1080</scope>
    <scope>DNA-BINDING</scope>
</reference>
<reference evidence="45" key="39">
    <citation type="journal article" date="2016" name="Elife">
        <title>Structural basis for the inhibition of RecBCD by Gam and its synergistic antibacterial effect with quinolones.</title>
        <authorList>
            <person name="Wilkinson M."/>
            <person name="Troman L."/>
            <person name="Wan Nur Ismah W.A."/>
            <person name="Chaban Y."/>
            <person name="Avison M.B."/>
            <person name="Dillingham M.S."/>
            <person name="Wigley D.B."/>
        </authorList>
    </citation>
    <scope>STRUCTURE BY ELECTRON MICROSCOPY (3.80 ANGSTROMS) OF RECBCD IN COMPLEX WITH LAMBDA GAMS PROTEIN</scope>
</reference>
<reference key="40">
    <citation type="journal article" date="2008" name="Microbiol. Mol. Biol. Rev.">
        <title>RecBCD enzyme and the repair of double-stranded DNA breaks.</title>
        <authorList>
            <person name="Dillingham M.S."/>
            <person name="Kowalczykowski S.C."/>
        </authorList>
    </citation>
    <scope>REVIEW</scope>
</reference>
<reference key="41">
    <citation type="journal article" date="2012" name="Microbiol. Mol. Biol. Rev.">
        <title>How RecBCD enzyme and Chi promote DNA break repair and recombination: a molecular biologist's view.</title>
        <authorList>
            <person name="Smith G.R."/>
        </authorList>
    </citation>
    <scope>REVIEW</scope>
</reference>
<organism>
    <name type="scientific">Escherichia coli (strain K12)</name>
    <dbReference type="NCBI Taxonomy" id="83333"/>
    <lineage>
        <taxon>Bacteria</taxon>
        <taxon>Pseudomonadati</taxon>
        <taxon>Pseudomonadota</taxon>
        <taxon>Gammaproteobacteria</taxon>
        <taxon>Enterobacterales</taxon>
        <taxon>Enterobacteriaceae</taxon>
        <taxon>Escherichia</taxon>
    </lineage>
</organism>
<protein>
    <recommendedName>
        <fullName evidence="1">RecBCD enzyme subunit RecB</fullName>
        <ecNumber evidence="1 26 32">3.1.11.5</ecNumber>
        <ecNumber evidence="1 6 7 32">5.6.2.4</ecNumber>
    </recommendedName>
    <alternativeName>
        <fullName evidence="1">DNA 3'-5' helicase subunit RecB</fullName>
    </alternativeName>
    <alternativeName>
        <fullName>Exodeoxyribonuclease V 135 kDa polypeptide</fullName>
    </alternativeName>
    <alternativeName>
        <fullName evidence="37">Exodeoxyribonuclease V beta chain</fullName>
    </alternativeName>
    <alternativeName>
        <fullName evidence="1">Exonuclease V subunit RecB</fullName>
        <shortName evidence="1">ExoV subunit RecB</shortName>
    </alternativeName>
    <alternativeName>
        <fullName evidence="1">Helicase/nuclease RecBCD subunit RecB</fullName>
    </alternativeName>
</protein>
<comment type="function">
    <text evidence="2 3 4 5 6 7 8 10 11 12 15 17 19 20 24 26 27 29 30 31 32 33 34 41">A helicase/nuclease that prepares dsDNA breaks (DSB) for recombinational DNA repair. Binds to DSBs and unwinds DNA via a rapid (&gt;1 kb/second) and highly processive (&gt;30 kb) ATP-dependent bidirectional helicase. Unwinds dsDNA until it encounters a Chi (crossover hotspot instigator, 5'-GCTGGTGG-3') sequence from the 3' direction. Cuts ssDNA a few nucleotides 3' to Chi site, by nicking one strand or switching the strand degraded (depending on the reaction conditions). The properties and activities of the enzyme are changed at Chi. The Chi-altered holoenzyme produces a long 3'-ssDNA overhang which facilitates RecA-binding to the ssDNA for homologous DNA recombination and repair. Holoenzyme degrades any linearized DNA that is unable to undergo homologous recombination (PubMed:123277, PubMed:4552016, PubMed:4562392). In the holoenzyme this subunit contributes ATPase, 3'-5' helicase, exonuclease activity and loads RecA onto ssDNA. The RecBC complex requires the RecD subunit for nuclease activity, but can translocate along ssDNA in both directions. The RecBCD complex does not unwind G-quadruplex DNA (PubMed:9765292). Probably interacts with a component of retron Ec48 which moniters RecBCD stability; when RecB is missing or impaired the retron is activated and becomes toxic (Probable) (PubMed:33157039).</text>
</comment>
<comment type="catalytic activity">
    <reaction evidence="1 26">
        <text>Exonucleolytic cleavage (in the presence of ATP) in either 5'- to 3'- or 3'- to 5'-direction to yield 5'-phosphooligonucleotides.</text>
        <dbReference type="EC" id="3.1.11.5"/>
    </reaction>
</comment>
<comment type="catalytic activity">
    <reaction evidence="1 6 7 32">
        <text>Couples ATP hydrolysis with the unwinding of duplex DNA by translocating in the 3'-5' direction.</text>
        <dbReference type="EC" id="5.6.2.4"/>
    </reaction>
</comment>
<comment type="catalytic activity">
    <reaction evidence="1 6 7">
        <text>ATP + H2O = ADP + phosphate + H(+)</text>
        <dbReference type="Rhea" id="RHEA:13065"/>
        <dbReference type="ChEBI" id="CHEBI:15377"/>
        <dbReference type="ChEBI" id="CHEBI:15378"/>
        <dbReference type="ChEBI" id="CHEBI:30616"/>
        <dbReference type="ChEBI" id="CHEBI:43474"/>
        <dbReference type="ChEBI" id="CHEBI:456216"/>
        <dbReference type="EC" id="5.6.2.4"/>
    </reaction>
</comment>
<comment type="cofactor">
    <cofactor evidence="1 9 12 16">
        <name>Mg(2+)</name>
        <dbReference type="ChEBI" id="CHEBI:18420"/>
    </cofactor>
    <text evidence="1 9 12 16">Binds 1 Mg(2+) ion per subunit. Magnesium is required for both helicase and nuclease activity; its relative concentration alters helicase speed and nuclease activity in a complicated fashion.</text>
</comment>
<comment type="activity regulation">
    <text evidence="2 8">After reacting with DNA bearing a Chi site the holoenzyme is disassembled and loses exonuclease activity, DNA unwinding and Chi-directed DNA cleavage; RecB remains complexed with ssDNA, which may prevent holoenzyme reassembly (PubMed:10197988). High levels of Mg(2+) (13 mM MgCl(2+)) or incubation with DNase allows holoenzyme reassembly, suggesting it is DNA bound to RecB that prevents reassembly (PubMed:10197988).</text>
</comment>
<comment type="activity regulation">
    <text evidence="14 25">(Microbial infection) RecBCD is inhibited by the lambda virus gam protein (both GamL and GamS isoforms); in vitro a short preincubation prior to adding DNA results in maximal inhibition.</text>
</comment>
<comment type="subunit">
    <text evidence="9 11 13 16 18 23 26 32">Heterotrimer of RecB, RecC and RecD. All subunits contribute to DNA-binding. The C-terminus interacts with RecA (PubMed:16483938). Interacts with YgbT (Cas1) (PubMed:21219465).</text>
</comment>
<comment type="subunit">
    <text evidence="14">(Microbial infection) Lambda virus GamS protein interacts with the enzyme without displacing any of the subunits.</text>
</comment>
<comment type="domain">
    <text evidence="3 9 13 32 34">The N-terminal DNA-binding domain (residues 1-929) is a ssDNA-dependent ATPase and has ATP-dependent 3'-5' helicase function; both are stimulated in the presence of RecC, suggesting this domain interacts with RecC. Holoenzyme reconstituted with this RecB N-terminal fragment has no nuclease activity (PubMed:9448271). The C-terminal domain (residues 928-1180) has weak ssDNA endonuclease activity as an isolated fragment (PubMed:10518611, PubMed:9790841). RecD probably interacts with this domain. The C-terminal domain interacts with RecA, facilitating its loading onto ssDNA. Interaction is decreased by ATP (PubMed:16483938). The RecB helicase domains change conformation upon nucleotide binding. As ssDNA is unwound and fed to the RecD subunit the latter transmits conformational changes through each subunit to activate the RecB nuclease (PubMed:15538360).</text>
</comment>
<comment type="domain">
    <text evidence="20">The holoenzyme may undergo conformational shifts upon DNA binding: the nuclease domain of RecB may swing away from the DNA exit tunnel in RecC. When Chi DNA binds to the RecC tunnel, the nuclease domain may then swing back to its original position (that seen in crystal structures), allowing it to nick the DNA 3' of the Chi site and then rotate to load RecA. At high Mg(2+) the nuclease domain may swing back more frequently, explaining differences seen in assays performed at high Mg(2+).</text>
</comment>
<comment type="disruption phenotype">
    <text evidence="5 22 27 28">Decreased degradation of DNA with free ends that is unable to undergo homologous recombination, which can fortuitously lead to more efficient viral infection (PubMed:123277, PubMed:4562392). Cells are deficient in DNA recombination repair and have increased sensitivity to UV light. The cultures have many inviable cells (PubMed:6389498). Cells cannot be transformed with retron Ec48-containing plasmids (PubMed:33157039).</text>
</comment>
<comment type="miscellaneous">
    <text evidence="1 35 36">In the RecBCD complex, RecB has a slow 3'-5' helicase, an exonuclease activity and loads RecA onto ssDNA, RecD has a fast 5'-3' helicase activity while RecC stimulates the ATPase and processivity of the RecB helicase and contributes to recognition of the Chi site.</text>
</comment>
<comment type="similarity">
    <text evidence="1">Belongs to the helicase family. UvrD subfamily.</text>
</comment>
<gene>
    <name evidence="1 38" type="primary">recB</name>
    <name type="synonym">ior</name>
    <name type="synonym">rorA</name>
    <name type="ordered locus">b2820</name>
    <name type="ordered locus">JW2788</name>
</gene>
<evidence type="ECO:0000255" key="1">
    <source>
        <dbReference type="HAMAP-Rule" id="MF_01485"/>
    </source>
</evidence>
<evidence type="ECO:0000269" key="2">
    <source>
    </source>
</evidence>
<evidence type="ECO:0000269" key="3">
    <source>
    </source>
</evidence>
<evidence type="ECO:0000269" key="4">
    <source>
    </source>
</evidence>
<evidence type="ECO:0000269" key="5">
    <source>
    </source>
</evidence>
<evidence type="ECO:0000269" key="6">
    <source>
    </source>
</evidence>
<evidence type="ECO:0000269" key="7">
    <source>
    </source>
</evidence>
<evidence type="ECO:0000269" key="8">
    <source>
    </source>
</evidence>
<evidence type="ECO:0000269" key="9">
    <source>
    </source>
</evidence>
<evidence type="ECO:0000269" key="10">
    <source>
    </source>
</evidence>
<evidence type="ECO:0000269" key="11">
    <source>
    </source>
</evidence>
<evidence type="ECO:0000269" key="12">
    <source>
    </source>
</evidence>
<evidence type="ECO:0000269" key="13">
    <source>
    </source>
</evidence>
<evidence type="ECO:0000269" key="14">
    <source>
    </source>
</evidence>
<evidence type="ECO:0000269" key="15">
    <source>
    </source>
</evidence>
<evidence type="ECO:0000269" key="16">
    <source>
    </source>
</evidence>
<evidence type="ECO:0000269" key="17">
    <source>
    </source>
</evidence>
<evidence type="ECO:0000269" key="18">
    <source>
    </source>
</evidence>
<evidence type="ECO:0000269" key="19">
    <source>
    </source>
</evidence>
<evidence type="ECO:0000269" key="20">
    <source>
    </source>
</evidence>
<evidence type="ECO:0000269" key="21">
    <source>
    </source>
</evidence>
<evidence type="ECO:0000269" key="22">
    <source>
    </source>
</evidence>
<evidence type="ECO:0000269" key="23">
    <source>
    </source>
</evidence>
<evidence type="ECO:0000269" key="24">
    <source>
    </source>
</evidence>
<evidence type="ECO:0000269" key="25">
    <source>
    </source>
</evidence>
<evidence type="ECO:0000269" key="26">
    <source>
    </source>
</evidence>
<evidence type="ECO:0000269" key="27">
    <source>
    </source>
</evidence>
<evidence type="ECO:0000269" key="28">
    <source>
    </source>
</evidence>
<evidence type="ECO:0000269" key="29">
    <source>
    </source>
</evidence>
<evidence type="ECO:0000269" key="30">
    <source>
    </source>
</evidence>
<evidence type="ECO:0000269" key="31">
    <source>
    </source>
</evidence>
<evidence type="ECO:0000269" key="32">
    <source>
    </source>
</evidence>
<evidence type="ECO:0000269" key="33">
    <source>
    </source>
</evidence>
<evidence type="ECO:0000269" key="34">
    <source>
    </source>
</evidence>
<evidence type="ECO:0000303" key="35">
    <source>
    </source>
</evidence>
<evidence type="ECO:0000303" key="36">
    <source>
    </source>
</evidence>
<evidence type="ECO:0000303" key="37">
    <source>
    </source>
</evidence>
<evidence type="ECO:0000303" key="38">
    <source>
    </source>
</evidence>
<evidence type="ECO:0000305" key="39">
    <source>
    </source>
</evidence>
<evidence type="ECO:0000305" key="40">
    <source>
    </source>
</evidence>
<evidence type="ECO:0000305" key="41">
    <source>
    </source>
</evidence>
<evidence type="ECO:0007744" key="42">
    <source>
        <dbReference type="PDB" id="1W36"/>
    </source>
</evidence>
<evidence type="ECO:0007744" key="43">
    <source>
        <dbReference type="PDB" id="3K70"/>
    </source>
</evidence>
<evidence type="ECO:0007744" key="44">
    <source>
        <dbReference type="PDB" id="5LD2"/>
    </source>
</evidence>
<evidence type="ECO:0007744" key="45">
    <source>
        <dbReference type="PDB" id="5MBV"/>
    </source>
</evidence>
<evidence type="ECO:0007829" key="46">
    <source>
        <dbReference type="PDB" id="1W36"/>
    </source>
</evidence>
<evidence type="ECO:0007829" key="47">
    <source>
        <dbReference type="PDB" id="8B1R"/>
    </source>
</evidence>
<evidence type="ECO:0007829" key="48">
    <source>
        <dbReference type="PDB" id="8B1T"/>
    </source>
</evidence>
<feature type="initiator methionine" description="Removed" evidence="11">
    <location>
        <position position="1"/>
    </location>
</feature>
<feature type="chain" id="PRO_0000102046" description="RecBCD enzyme subunit RecB">
    <location>
        <begin position="2"/>
        <end position="1180"/>
    </location>
</feature>
<feature type="domain" description="UvrD-like helicase ATP-binding" evidence="1">
    <location>
        <begin position="2"/>
        <end position="450"/>
    </location>
</feature>
<feature type="domain" description="UvrD-like helicase C-terminal" evidence="1">
    <location>
        <begin position="480"/>
        <end position="746"/>
    </location>
</feature>
<feature type="DNA-binding region">
    <location>
        <begin position="252"/>
        <end position="254"/>
    </location>
</feature>
<feature type="DNA-binding region">
    <location>
        <begin position="511"/>
        <end position="512"/>
    </location>
</feature>
<feature type="DNA-binding region">
    <location>
        <begin position="560"/>
        <end position="561"/>
    </location>
</feature>
<feature type="DNA-binding region">
    <location>
        <position position="761"/>
    </location>
</feature>
<feature type="region of interest" description="ATPase, DNA-binding and helicase activity, interacts with RecC" evidence="1 32">
    <location>
        <begin position="2"/>
        <end position="853"/>
    </location>
</feature>
<feature type="region of interest" description="Nuclease activity, interacts with RecD and RecA" evidence="1 3 34">
    <location>
        <begin position="900"/>
        <end position="1180"/>
    </location>
</feature>
<feature type="active site" description="For nuclease activity" evidence="1 3 34">
    <location>
        <position position="1080"/>
    </location>
</feature>
<feature type="binding site" evidence="1 9">
    <location>
        <begin position="23"/>
        <end position="30"/>
    </location>
    <ligand>
        <name>ATP</name>
        <dbReference type="ChEBI" id="CHEBI:30616"/>
    </ligand>
</feature>
<feature type="binding site" evidence="9">
    <location>
        <position position="447"/>
    </location>
    <ligand>
        <name>ATP</name>
        <dbReference type="ChEBI" id="CHEBI:30616"/>
    </ligand>
</feature>
<feature type="binding site" evidence="1 39 40">
    <location>
        <position position="956"/>
    </location>
    <ligand>
        <name>Mg(2+)</name>
        <dbReference type="ChEBI" id="CHEBI:18420"/>
    </ligand>
</feature>
<feature type="binding site" evidence="1 39 40">
    <location>
        <position position="1067"/>
    </location>
    <ligand>
        <name>Mg(2+)</name>
        <dbReference type="ChEBI" id="CHEBI:18420"/>
    </ligand>
</feature>
<feature type="binding site" evidence="1 39 40">
    <location>
        <position position="1080"/>
    </location>
    <ligand>
        <name>Mg(2+)</name>
        <dbReference type="ChEBI" id="CHEBI:18420"/>
    </ligand>
</feature>
<feature type="binding site" evidence="39 40">
    <location>
        <position position="1081"/>
    </location>
    <ligand>
        <name>Mg(2+)</name>
        <dbReference type="ChEBI" id="CHEBI:18420"/>
    </ligand>
</feature>
<feature type="mutagenesis site" description="Subunit loses ATPase and 3'-5' helicase activity, holoenzyme has 3-5 fold less helicase activity, 20-fold less processivity." evidence="6 10 19">
    <original>K</original>
    <variation>Q</variation>
    <location>
        <position position="29"/>
    </location>
</feature>
<feature type="mutagenesis site" description="Large decrease in recombination, loss of Chi hotspot activity, decreased RecB helicase rate, retains nuclease activity but not Chi-sequence specificity, does not load RecA." evidence="15">
    <original>Y</original>
    <variation>H</variation>
    <location>
        <position position="803"/>
    </location>
</feature>
<feature type="mutagenesis site" description="Large decrease in recombination, loss of Chi hotspot activity, decreased RecB helicase rate, retains nuclease activity but not Chi-sequence specificity, does not load RecA." evidence="15">
    <original>V</original>
    <variation>E</variation>
    <location>
        <position position="804"/>
    </location>
</feature>
<feature type="mutagenesis site" description="In recB-2109; absence of nuclease modification at Chi sites." evidence="4">
    <original>T</original>
    <variation>I</variation>
    <location>
        <position position="807"/>
    </location>
</feature>
<feature type="mutagenesis site" description="Subunit loses nuclease activity." evidence="12">
    <original>D</original>
    <variation>A</variation>
    <location>
        <position position="1067"/>
    </location>
</feature>
<feature type="mutagenesis site" description="Loss of holoenzyme nuclease activity, retains full helicase activity, does not act at Chi, no loading of RecA on ssDNA and no recombinational repair." evidence="3 12 21 34">
    <original>D</original>
    <variation>A</variation>
    <location>
        <position position="1080"/>
    </location>
</feature>
<feature type="helix" evidence="46">
    <location>
        <begin position="10"/>
        <end position="12"/>
    </location>
</feature>
<feature type="strand" evidence="46">
    <location>
        <begin position="19"/>
        <end position="22"/>
    </location>
</feature>
<feature type="helix" evidence="46">
    <location>
        <begin position="29"/>
        <end position="41"/>
    </location>
</feature>
<feature type="strand" evidence="46">
    <location>
        <begin position="45"/>
        <end position="49"/>
    </location>
</feature>
<feature type="helix" evidence="46">
    <location>
        <begin position="56"/>
        <end position="58"/>
    </location>
</feature>
<feature type="strand" evidence="46">
    <location>
        <begin position="59"/>
        <end position="64"/>
    </location>
</feature>
<feature type="helix" evidence="46">
    <location>
        <begin position="66"/>
        <end position="88"/>
    </location>
</feature>
<feature type="helix" evidence="46">
    <location>
        <begin position="95"/>
        <end position="103"/>
    </location>
</feature>
<feature type="helix" evidence="46">
    <location>
        <begin position="107"/>
        <end position="120"/>
    </location>
</feature>
<feature type="helix" evidence="46">
    <location>
        <begin position="121"/>
        <end position="123"/>
    </location>
</feature>
<feature type="strand" evidence="46">
    <location>
        <begin position="125"/>
        <end position="128"/>
    </location>
</feature>
<feature type="helix" evidence="46">
    <location>
        <begin position="129"/>
        <end position="139"/>
    </location>
</feature>
<feature type="helix" evidence="46">
    <location>
        <begin position="141"/>
        <end position="144"/>
    </location>
</feature>
<feature type="helix" evidence="46">
    <location>
        <begin position="157"/>
        <end position="172"/>
    </location>
</feature>
<feature type="helix" evidence="46">
    <location>
        <begin position="177"/>
        <end position="186"/>
    </location>
</feature>
<feature type="helix" evidence="46">
    <location>
        <begin position="190"/>
        <end position="197"/>
    </location>
</feature>
<feature type="turn" evidence="46">
    <location>
        <begin position="198"/>
        <end position="201"/>
    </location>
</feature>
<feature type="strand" evidence="46">
    <location>
        <begin position="202"/>
        <end position="204"/>
    </location>
</feature>
<feature type="strand" evidence="46">
    <location>
        <begin position="207"/>
        <end position="210"/>
    </location>
</feature>
<feature type="helix" evidence="46">
    <location>
        <begin position="218"/>
        <end position="234"/>
    </location>
</feature>
<feature type="turn" evidence="47">
    <location>
        <begin position="239"/>
        <end position="241"/>
    </location>
</feature>
<feature type="strand" evidence="46">
    <location>
        <begin position="249"/>
        <end position="251"/>
    </location>
</feature>
<feature type="helix" evidence="46">
    <location>
        <begin position="255"/>
        <end position="263"/>
    </location>
</feature>
<feature type="helix" evidence="46">
    <location>
        <begin position="283"/>
        <end position="287"/>
    </location>
</feature>
<feature type="helix" evidence="47">
    <location>
        <begin position="291"/>
        <end position="297"/>
    </location>
</feature>
<feature type="helix" evidence="46">
    <location>
        <begin position="312"/>
        <end position="316"/>
    </location>
</feature>
<feature type="helix" evidence="46">
    <location>
        <begin position="324"/>
        <end position="346"/>
    </location>
</feature>
<feature type="helix" evidence="46">
    <location>
        <begin position="351"/>
        <end position="363"/>
    </location>
</feature>
<feature type="helix" evidence="46">
    <location>
        <begin position="367"/>
        <end position="377"/>
    </location>
</feature>
<feature type="strand" evidence="46">
    <location>
        <begin position="379"/>
        <end position="383"/>
    </location>
</feature>
<feature type="helix" evidence="46">
    <location>
        <begin position="386"/>
        <end position="388"/>
    </location>
</feature>
<feature type="helix" evidence="46">
    <location>
        <begin position="391"/>
        <end position="401"/>
    </location>
</feature>
<feature type="strand" evidence="46">
    <location>
        <begin position="408"/>
        <end position="413"/>
    </location>
</feature>
<feature type="helix" evidence="46">
    <location>
        <begin position="415"/>
        <end position="417"/>
    </location>
</feature>
<feature type="turn" evidence="46">
    <location>
        <begin position="421"/>
        <end position="424"/>
    </location>
</feature>
<feature type="helix" evidence="46">
    <location>
        <begin position="427"/>
        <end position="436"/>
    </location>
</feature>
<feature type="strand" evidence="46">
    <location>
        <begin position="440"/>
        <end position="442"/>
    </location>
</feature>
<feature type="helix" evidence="46">
    <location>
        <begin position="451"/>
        <end position="462"/>
    </location>
</feature>
<feature type="strand" evidence="46">
    <location>
        <begin position="463"/>
        <end position="466"/>
    </location>
</feature>
<feature type="helix" evidence="46">
    <location>
        <begin position="482"/>
        <end position="484"/>
    </location>
</feature>
<feature type="strand" evidence="46">
    <location>
        <begin position="487"/>
        <end position="491"/>
    </location>
</feature>
<feature type="strand" evidence="46">
    <location>
        <begin position="494"/>
        <end position="496"/>
    </location>
</feature>
<feature type="strand" evidence="46">
    <location>
        <begin position="498"/>
        <end position="503"/>
    </location>
</feature>
<feature type="helix" evidence="46">
    <location>
        <begin position="513"/>
        <end position="534"/>
    </location>
</feature>
<feature type="strand" evidence="46">
    <location>
        <begin position="538"/>
        <end position="542"/>
    </location>
</feature>
<feature type="strand" evidence="46">
    <location>
        <begin position="545"/>
        <end position="548"/>
    </location>
</feature>
<feature type="helix" evidence="46">
    <location>
        <begin position="551"/>
        <end position="553"/>
    </location>
</feature>
<feature type="strand" evidence="46">
    <location>
        <begin position="554"/>
        <end position="560"/>
    </location>
</feature>
<feature type="helix" evidence="46">
    <location>
        <begin position="561"/>
        <end position="572"/>
    </location>
</feature>
<feature type="turn" evidence="46">
    <location>
        <begin position="573"/>
        <end position="575"/>
    </location>
</feature>
<feature type="strand" evidence="46">
    <location>
        <begin position="578"/>
        <end position="580"/>
    </location>
</feature>
<feature type="helix" evidence="46">
    <location>
        <begin position="587"/>
        <end position="589"/>
    </location>
</feature>
<feature type="helix" evidence="46">
    <location>
        <begin position="592"/>
        <end position="603"/>
    </location>
</feature>
<feature type="helix" evidence="46">
    <location>
        <begin position="609"/>
        <end position="617"/>
    </location>
</feature>
<feature type="helix" evidence="46">
    <location>
        <begin position="619"/>
        <end position="621"/>
    </location>
</feature>
<feature type="helix" evidence="46">
    <location>
        <begin position="625"/>
        <end position="633"/>
    </location>
</feature>
<feature type="helix" evidence="46">
    <location>
        <begin position="635"/>
        <end position="655"/>
    </location>
</feature>
<feature type="helix" evidence="46">
    <location>
        <begin position="657"/>
        <end position="667"/>
    </location>
</feature>
<feature type="helix" evidence="46">
    <location>
        <begin position="670"/>
        <end position="676"/>
    </location>
</feature>
<feature type="strand" evidence="46">
    <location>
        <begin position="677"/>
        <end position="679"/>
    </location>
</feature>
<feature type="helix" evidence="46">
    <location>
        <begin position="680"/>
        <end position="698"/>
    </location>
</feature>
<feature type="helix" evidence="46">
    <location>
        <begin position="704"/>
        <end position="716"/>
    </location>
</feature>
<feature type="helix" evidence="46">
    <location>
        <begin position="732"/>
        <end position="734"/>
    </location>
</feature>
<feature type="strand" evidence="46">
    <location>
        <begin position="735"/>
        <end position="740"/>
    </location>
</feature>
<feature type="turn" evidence="46">
    <location>
        <begin position="741"/>
        <end position="744"/>
    </location>
</feature>
<feature type="strand" evidence="46">
    <location>
        <begin position="749"/>
        <end position="754"/>
    </location>
</feature>
<feature type="turn" evidence="46">
    <location>
        <begin position="755"/>
        <end position="758"/>
    </location>
</feature>
<feature type="strand" evidence="46">
    <location>
        <begin position="767"/>
        <end position="769"/>
    </location>
</feature>
<feature type="turn" evidence="46">
    <location>
        <begin position="771"/>
        <end position="773"/>
    </location>
</feature>
<feature type="strand" evidence="46">
    <location>
        <begin position="776"/>
        <end position="781"/>
    </location>
</feature>
<feature type="helix" evidence="46">
    <location>
        <begin position="784"/>
        <end position="806"/>
    </location>
</feature>
<feature type="strand" evidence="46">
    <location>
        <begin position="809"/>
        <end position="817"/>
    </location>
</feature>
<feature type="helix" evidence="46">
    <location>
        <begin position="832"/>
        <end position="835"/>
    </location>
</feature>
<feature type="helix" evidence="46">
    <location>
        <begin position="837"/>
        <end position="842"/>
    </location>
</feature>
<feature type="turn" evidence="48">
    <location>
        <begin position="843"/>
        <end position="845"/>
    </location>
</feature>
<feature type="helix" evidence="46">
    <location>
        <begin position="850"/>
        <end position="859"/>
    </location>
</feature>
<feature type="strand" evidence="46">
    <location>
        <begin position="865"/>
        <end position="869"/>
    </location>
</feature>
<feature type="strand" evidence="46">
    <location>
        <begin position="901"/>
        <end position="906"/>
    </location>
</feature>
<feature type="strand" evidence="46">
    <location>
        <begin position="908"/>
        <end position="910"/>
    </location>
</feature>
<feature type="turn" evidence="47">
    <location>
        <begin position="913"/>
        <end position="916"/>
    </location>
</feature>
<feature type="helix" evidence="46">
    <location>
        <begin position="917"/>
        <end position="920"/>
    </location>
</feature>
<feature type="helix" evidence="46">
    <location>
        <begin position="942"/>
        <end position="944"/>
    </location>
</feature>
<feature type="helix" evidence="46">
    <location>
        <begin position="949"/>
        <end position="958"/>
    </location>
</feature>
<feature type="strand" evidence="46">
    <location>
        <begin position="964"/>
        <end position="966"/>
    </location>
</feature>
<feature type="helix" evidence="46">
    <location>
        <begin position="970"/>
        <end position="979"/>
    </location>
</feature>
<feature type="helix" evidence="46">
    <location>
        <begin position="984"/>
        <end position="986"/>
    </location>
</feature>
<feature type="helix" evidence="46">
    <location>
        <begin position="987"/>
        <end position="998"/>
    </location>
</feature>
<feature type="strand" evidence="46">
    <location>
        <begin position="1002"/>
        <end position="1006"/>
    </location>
</feature>
<feature type="helix" evidence="46">
    <location>
        <begin position="1009"/>
        <end position="1011"/>
    </location>
</feature>
<feature type="helix" evidence="46">
    <location>
        <begin position="1014"/>
        <end position="1016"/>
    </location>
</feature>
<feature type="strand" evidence="46">
    <location>
        <begin position="1017"/>
        <end position="1027"/>
    </location>
</feature>
<feature type="helix" evidence="46">
    <location>
        <begin position="1033"/>
        <end position="1043"/>
    </location>
</feature>
<feature type="helix" evidence="47">
    <location>
        <begin position="1045"/>
        <end position="1049"/>
    </location>
</feature>
<feature type="strand" evidence="46">
    <location>
        <begin position="1059"/>
        <end position="1074"/>
    </location>
</feature>
<feature type="strand" evidence="46">
    <location>
        <begin position="1079"/>
        <end position="1082"/>
    </location>
</feature>
<feature type="helix" evidence="46">
    <location>
        <begin position="1090"/>
        <end position="1092"/>
    </location>
</feature>
<feature type="helix" evidence="46">
    <location>
        <begin position="1095"/>
        <end position="1104"/>
    </location>
</feature>
<feature type="turn" evidence="46">
    <location>
        <begin position="1105"/>
        <end position="1107"/>
    </location>
</feature>
<feature type="helix" evidence="46">
    <location>
        <begin position="1108"/>
        <end position="1125"/>
    </location>
</feature>
<feature type="strand" evidence="46">
    <location>
        <begin position="1126"/>
        <end position="1128"/>
    </location>
</feature>
<feature type="helix" evidence="46">
    <location>
        <begin position="1131"/>
        <end position="1134"/>
    </location>
</feature>
<feature type="strand" evidence="46">
    <location>
        <begin position="1139"/>
        <end position="1145"/>
    </location>
</feature>
<feature type="strand" evidence="47">
    <location>
        <begin position="1155"/>
        <end position="1158"/>
    </location>
</feature>
<feature type="helix" evidence="46">
    <location>
        <begin position="1164"/>
        <end position="1173"/>
    </location>
</feature>